<gene>
    <name evidence="1" type="primary">acpS</name>
    <name type="ordered locus">cgR_2404</name>
</gene>
<keyword id="KW-0963">Cytoplasm</keyword>
<keyword id="KW-0275">Fatty acid biosynthesis</keyword>
<keyword id="KW-0276">Fatty acid metabolism</keyword>
<keyword id="KW-0444">Lipid biosynthesis</keyword>
<keyword id="KW-0443">Lipid metabolism</keyword>
<keyword id="KW-0460">Magnesium</keyword>
<keyword id="KW-0479">Metal-binding</keyword>
<keyword id="KW-0808">Transferase</keyword>
<proteinExistence type="inferred from homology"/>
<organism>
    <name type="scientific">Corynebacterium glutamicum (strain R)</name>
    <dbReference type="NCBI Taxonomy" id="340322"/>
    <lineage>
        <taxon>Bacteria</taxon>
        <taxon>Bacillati</taxon>
        <taxon>Actinomycetota</taxon>
        <taxon>Actinomycetes</taxon>
        <taxon>Mycobacteriales</taxon>
        <taxon>Corynebacteriaceae</taxon>
        <taxon>Corynebacterium</taxon>
    </lineage>
</organism>
<protein>
    <recommendedName>
        <fullName evidence="1">Holo-[acyl-carrier-protein] synthase</fullName>
        <shortName evidence="1">Holo-ACP synthase</shortName>
        <ecNumber evidence="1">2.7.8.7</ecNumber>
    </recommendedName>
    <alternativeName>
        <fullName evidence="1">4'-phosphopantetheinyl transferase AcpS</fullName>
    </alternativeName>
</protein>
<accession>A4QGP6</accession>
<reference key="1">
    <citation type="journal article" date="2007" name="Microbiology">
        <title>Comparative analysis of the Corynebacterium glutamicum group and complete genome sequence of strain R.</title>
        <authorList>
            <person name="Yukawa H."/>
            <person name="Omumasaba C.A."/>
            <person name="Nonaka H."/>
            <person name="Kos P."/>
            <person name="Okai N."/>
            <person name="Suzuki N."/>
            <person name="Suda M."/>
            <person name="Tsuge Y."/>
            <person name="Watanabe J."/>
            <person name="Ikeda Y."/>
            <person name="Vertes A.A."/>
            <person name="Inui M."/>
        </authorList>
    </citation>
    <scope>NUCLEOTIDE SEQUENCE [LARGE SCALE GENOMIC DNA]</scope>
    <source>
        <strain>R</strain>
    </source>
</reference>
<dbReference type="EC" id="2.7.8.7" evidence="1"/>
<dbReference type="EMBL" id="AP009044">
    <property type="protein sequence ID" value="BAF55412.1"/>
    <property type="molecule type" value="Genomic_DNA"/>
</dbReference>
<dbReference type="RefSeq" id="WP_011897788.1">
    <property type="nucleotide sequence ID" value="NC_009342.1"/>
</dbReference>
<dbReference type="SMR" id="A4QGP6"/>
<dbReference type="KEGG" id="cgt:cgR_2404"/>
<dbReference type="HOGENOM" id="CLU_089696_2_0_11"/>
<dbReference type="PhylomeDB" id="A4QGP6"/>
<dbReference type="Proteomes" id="UP000006698">
    <property type="component" value="Chromosome"/>
</dbReference>
<dbReference type="GO" id="GO:0005737">
    <property type="term" value="C:cytoplasm"/>
    <property type="evidence" value="ECO:0007669"/>
    <property type="project" value="UniProtKB-SubCell"/>
</dbReference>
<dbReference type="GO" id="GO:0008897">
    <property type="term" value="F:holo-[acyl-carrier-protein] synthase activity"/>
    <property type="evidence" value="ECO:0007669"/>
    <property type="project" value="UniProtKB-UniRule"/>
</dbReference>
<dbReference type="GO" id="GO:0000287">
    <property type="term" value="F:magnesium ion binding"/>
    <property type="evidence" value="ECO:0007669"/>
    <property type="project" value="UniProtKB-UniRule"/>
</dbReference>
<dbReference type="GO" id="GO:0006633">
    <property type="term" value="P:fatty acid biosynthetic process"/>
    <property type="evidence" value="ECO:0007669"/>
    <property type="project" value="UniProtKB-UniRule"/>
</dbReference>
<dbReference type="Gene3D" id="3.90.470.20">
    <property type="entry name" value="4'-phosphopantetheinyl transferase domain"/>
    <property type="match status" value="1"/>
</dbReference>
<dbReference type="HAMAP" id="MF_00101">
    <property type="entry name" value="AcpS"/>
    <property type="match status" value="1"/>
</dbReference>
<dbReference type="InterPro" id="IPR008278">
    <property type="entry name" value="4-PPantetheinyl_Trfase_dom"/>
</dbReference>
<dbReference type="InterPro" id="IPR037143">
    <property type="entry name" value="4-PPantetheinyl_Trfase_dom_sf"/>
</dbReference>
<dbReference type="InterPro" id="IPR002582">
    <property type="entry name" value="ACPS"/>
</dbReference>
<dbReference type="InterPro" id="IPR004568">
    <property type="entry name" value="Ppantetheine-prot_Trfase_dom"/>
</dbReference>
<dbReference type="NCBIfam" id="TIGR00556">
    <property type="entry name" value="pantethn_trn"/>
    <property type="match status" value="1"/>
</dbReference>
<dbReference type="NCBIfam" id="NF000831">
    <property type="entry name" value="PRK00070.3-1"/>
    <property type="match status" value="1"/>
</dbReference>
<dbReference type="Pfam" id="PF01648">
    <property type="entry name" value="ACPS"/>
    <property type="match status" value="1"/>
</dbReference>
<dbReference type="SUPFAM" id="SSF56214">
    <property type="entry name" value="4'-phosphopantetheinyl transferase"/>
    <property type="match status" value="1"/>
</dbReference>
<sequence>MISIGTDLVHISAFAEQLAQPGSSFMEVFSAGERRKANERQGSRYAEHLAGRWAAKESFIKAWSQAIYGQPPVIAEEAVVWRDIEVRADAWGRVAIELAPELAAVVRESIGEFSSSLSISHDGDYAVATCVLTIQ</sequence>
<evidence type="ECO:0000255" key="1">
    <source>
        <dbReference type="HAMAP-Rule" id="MF_00101"/>
    </source>
</evidence>
<feature type="chain" id="PRO_1000008417" description="Holo-[acyl-carrier-protein] synthase">
    <location>
        <begin position="1"/>
        <end position="135"/>
    </location>
</feature>
<feature type="binding site" evidence="1">
    <location>
        <position position="7"/>
    </location>
    <ligand>
        <name>Mg(2+)</name>
        <dbReference type="ChEBI" id="CHEBI:18420"/>
    </ligand>
</feature>
<feature type="binding site" evidence="1">
    <location>
        <position position="57"/>
    </location>
    <ligand>
        <name>Mg(2+)</name>
        <dbReference type="ChEBI" id="CHEBI:18420"/>
    </ligand>
</feature>
<name>ACPS_CORGB</name>
<comment type="function">
    <text evidence="1">Transfers the 4'-phosphopantetheine moiety from coenzyme A to a Ser of acyl-carrier-protein.</text>
</comment>
<comment type="catalytic activity">
    <reaction evidence="1">
        <text>apo-[ACP] + CoA = holo-[ACP] + adenosine 3',5'-bisphosphate + H(+)</text>
        <dbReference type="Rhea" id="RHEA:12068"/>
        <dbReference type="Rhea" id="RHEA-COMP:9685"/>
        <dbReference type="Rhea" id="RHEA-COMP:9690"/>
        <dbReference type="ChEBI" id="CHEBI:15378"/>
        <dbReference type="ChEBI" id="CHEBI:29999"/>
        <dbReference type="ChEBI" id="CHEBI:57287"/>
        <dbReference type="ChEBI" id="CHEBI:58343"/>
        <dbReference type="ChEBI" id="CHEBI:64479"/>
        <dbReference type="EC" id="2.7.8.7"/>
    </reaction>
</comment>
<comment type="cofactor">
    <cofactor evidence="1">
        <name>Mg(2+)</name>
        <dbReference type="ChEBI" id="CHEBI:18420"/>
    </cofactor>
</comment>
<comment type="subcellular location">
    <subcellularLocation>
        <location evidence="1">Cytoplasm</location>
    </subcellularLocation>
</comment>
<comment type="similarity">
    <text evidence="1">Belongs to the P-Pant transferase superfamily. AcpS family.</text>
</comment>